<evidence type="ECO:0000255" key="1">
    <source>
        <dbReference type="HAMAP-Rule" id="MF_02068"/>
    </source>
</evidence>
<feature type="chain" id="PRO_1000094355" description="Ribitol-5-phosphate cytidylyltransferase">
    <location>
        <begin position="1"/>
        <end position="235"/>
    </location>
</feature>
<feature type="binding site" evidence="1">
    <location>
        <begin position="7"/>
        <end position="10"/>
    </location>
    <ligand>
        <name>CTP</name>
        <dbReference type="ChEBI" id="CHEBI:37563"/>
    </ligand>
</feature>
<feature type="binding site" evidence="1">
    <location>
        <begin position="82"/>
        <end position="88"/>
    </location>
    <ligand>
        <name>CTP</name>
        <dbReference type="ChEBI" id="CHEBI:37563"/>
    </ligand>
</feature>
<feature type="binding site" evidence="1">
    <location>
        <position position="113"/>
    </location>
    <ligand>
        <name>CTP</name>
        <dbReference type="ChEBI" id="CHEBI:37563"/>
    </ligand>
</feature>
<feature type="site" description="Transition state stabilizer" evidence="1">
    <location>
        <position position="14"/>
    </location>
</feature>
<feature type="site" description="Transition state stabilizer" evidence="1">
    <location>
        <position position="22"/>
    </location>
</feature>
<feature type="site" description="Positions ribitol 5-phosphate for the nucleophilic attack" evidence="1">
    <location>
        <position position="161"/>
    </location>
</feature>
<feature type="site" description="Positions ribitol 5-phosphate for the nucleophilic attack" evidence="1">
    <location>
        <position position="218"/>
    </location>
</feature>
<protein>
    <recommendedName>
        <fullName evidence="1">Ribitol-5-phosphate cytidylyltransferase</fullName>
        <ecNumber evidence="1">2.7.7.40</ecNumber>
    </recommendedName>
</protein>
<organism>
    <name type="scientific">Streptococcus pneumoniae (strain CGSP14)</name>
    <dbReference type="NCBI Taxonomy" id="516950"/>
    <lineage>
        <taxon>Bacteria</taxon>
        <taxon>Bacillati</taxon>
        <taxon>Bacillota</taxon>
        <taxon>Bacilli</taxon>
        <taxon>Lactobacillales</taxon>
        <taxon>Streptococcaceae</taxon>
        <taxon>Streptococcus</taxon>
    </lineage>
</organism>
<keyword id="KW-0961">Cell wall biogenesis/degradation</keyword>
<keyword id="KW-0548">Nucleotidyltransferase</keyword>
<keyword id="KW-0777">Teichoic acid biosynthesis</keyword>
<keyword id="KW-0808">Transferase</keyword>
<dbReference type="EC" id="2.7.7.40" evidence="1"/>
<dbReference type="EMBL" id="CP001033">
    <property type="protein sequence ID" value="ACB90487.1"/>
    <property type="molecule type" value="Genomic_DNA"/>
</dbReference>
<dbReference type="RefSeq" id="WP_000638503.1">
    <property type="nucleotide sequence ID" value="NC_010582.1"/>
</dbReference>
<dbReference type="SMR" id="B2IQ63"/>
<dbReference type="KEGG" id="spw:SPCG_1235"/>
<dbReference type="HOGENOM" id="CLU_061281_2_3_9"/>
<dbReference type="UniPathway" id="UPA00790"/>
<dbReference type="GO" id="GO:0050518">
    <property type="term" value="F:2-C-methyl-D-erythritol 4-phosphate cytidylyltransferase activity"/>
    <property type="evidence" value="ECO:0007669"/>
    <property type="project" value="TreeGrafter"/>
</dbReference>
<dbReference type="GO" id="GO:0047349">
    <property type="term" value="F:D-ribitol-5-phosphate cytidylyltransferase activity"/>
    <property type="evidence" value="ECO:0007669"/>
    <property type="project" value="UniProtKB-UniRule"/>
</dbReference>
<dbReference type="GO" id="GO:0071555">
    <property type="term" value="P:cell wall organization"/>
    <property type="evidence" value="ECO:0007669"/>
    <property type="project" value="UniProtKB-KW"/>
</dbReference>
<dbReference type="GO" id="GO:0008299">
    <property type="term" value="P:isoprenoid biosynthetic process"/>
    <property type="evidence" value="ECO:0007669"/>
    <property type="project" value="InterPro"/>
</dbReference>
<dbReference type="GO" id="GO:1902012">
    <property type="term" value="P:poly(ribitol phosphate) teichoic acid biosynthetic process"/>
    <property type="evidence" value="ECO:0007669"/>
    <property type="project" value="UniProtKB-UniRule"/>
</dbReference>
<dbReference type="CDD" id="cd02516">
    <property type="entry name" value="CDP-ME_synthetase"/>
    <property type="match status" value="1"/>
</dbReference>
<dbReference type="FunFam" id="3.90.550.10:FF:000003">
    <property type="entry name" value="2-C-methyl-D-erythritol 4-phosphate cytidylyltransferase"/>
    <property type="match status" value="1"/>
</dbReference>
<dbReference type="Gene3D" id="3.90.550.10">
    <property type="entry name" value="Spore Coat Polysaccharide Biosynthesis Protein SpsA, Chain A"/>
    <property type="match status" value="1"/>
</dbReference>
<dbReference type="HAMAP" id="MF_02068">
    <property type="entry name" value="TarI"/>
    <property type="match status" value="1"/>
</dbReference>
<dbReference type="InterPro" id="IPR034683">
    <property type="entry name" value="IspD/TarI"/>
</dbReference>
<dbReference type="InterPro" id="IPR050088">
    <property type="entry name" value="IspD/TarI_cytidylyltransf_bact"/>
</dbReference>
<dbReference type="InterPro" id="IPR018294">
    <property type="entry name" value="ISPD_synthase_CS"/>
</dbReference>
<dbReference type="InterPro" id="IPR029044">
    <property type="entry name" value="Nucleotide-diphossugar_trans"/>
</dbReference>
<dbReference type="InterPro" id="IPR034709">
    <property type="entry name" value="TarI"/>
</dbReference>
<dbReference type="NCBIfam" id="NF001183">
    <property type="entry name" value="PRK00155.1-3"/>
    <property type="match status" value="1"/>
</dbReference>
<dbReference type="PANTHER" id="PTHR32125">
    <property type="entry name" value="2-C-METHYL-D-ERYTHRITOL 4-PHOSPHATE CYTIDYLYLTRANSFERASE, CHLOROPLASTIC"/>
    <property type="match status" value="1"/>
</dbReference>
<dbReference type="PANTHER" id="PTHR32125:SF8">
    <property type="entry name" value="RIBITOL-5-PHOSPHATE CYTIDYLYLTRANSFERASE"/>
    <property type="match status" value="1"/>
</dbReference>
<dbReference type="Pfam" id="PF01128">
    <property type="entry name" value="IspD"/>
    <property type="match status" value="1"/>
</dbReference>
<dbReference type="SUPFAM" id="SSF53448">
    <property type="entry name" value="Nucleotide-diphospho-sugar transferases"/>
    <property type="match status" value="1"/>
</dbReference>
<dbReference type="PROSITE" id="PS01295">
    <property type="entry name" value="ISPD"/>
    <property type="match status" value="1"/>
</dbReference>
<proteinExistence type="inferred from homology"/>
<sequence length="235" mass="26329">MIYAGILAGGTGTRMGISNLPKQFLELGDRPILIHTIEKFVLEPSIEKIVVGVHGDWVSHAEDLVDKYLPLYKERIIITKGGADRNTSIKKIIEAIDAYRPLTPEDIVVTHDSVRPFITLRMIQDNIQLAQNHDAVDTVVEAVDTIVESTNGQFITDIPNRAHLYQGQTPQTFRCKDFMDLYGSLSDEEKEIWTDACKIFVIKGKDVALAKGEYSNLKITTVTDLKIAKSMIEKD</sequence>
<gene>
    <name evidence="1" type="primary">tarI</name>
    <name type="ordered locus">SPCG_1235</name>
</gene>
<name>TARI_STRPS</name>
<accession>B2IQ63</accession>
<comment type="function">
    <text evidence="1">Catalyzes the transfer of the cytidylyl group of CTP to D-ribitol 5-phosphate.</text>
</comment>
<comment type="catalytic activity">
    <reaction evidence="1">
        <text>D-ribitol 5-phosphate + CTP + H(+) = CDP-L-ribitol + diphosphate</text>
        <dbReference type="Rhea" id="RHEA:12456"/>
        <dbReference type="ChEBI" id="CHEBI:15378"/>
        <dbReference type="ChEBI" id="CHEBI:33019"/>
        <dbReference type="ChEBI" id="CHEBI:37563"/>
        <dbReference type="ChEBI" id="CHEBI:57608"/>
        <dbReference type="ChEBI" id="CHEBI:57695"/>
        <dbReference type="EC" id="2.7.7.40"/>
    </reaction>
</comment>
<comment type="pathway">
    <text evidence="1">Cell wall biogenesis; poly(ribitol phosphate) teichoic acid biosynthesis.</text>
</comment>
<comment type="similarity">
    <text evidence="1">Belongs to the IspD/TarI cytidylyltransferase family. TarI subfamily.</text>
</comment>
<reference key="1">
    <citation type="journal article" date="2009" name="BMC Genomics">
        <title>Genome evolution driven by host adaptations results in a more virulent and antimicrobial-resistant Streptococcus pneumoniae serotype 14.</title>
        <authorList>
            <person name="Ding F."/>
            <person name="Tang P."/>
            <person name="Hsu M.-H."/>
            <person name="Cui P."/>
            <person name="Hu S."/>
            <person name="Yu J."/>
            <person name="Chiu C.-H."/>
        </authorList>
    </citation>
    <scope>NUCLEOTIDE SEQUENCE [LARGE SCALE GENOMIC DNA]</scope>
    <source>
        <strain>CGSP14</strain>
    </source>
</reference>